<name>RLMD_IDILO</name>
<feature type="chain" id="PRO_0000414805" description="23S rRNA (uracil(1939)-C(5))-methyltransferase RlmD">
    <location>
        <begin position="1"/>
        <end position="450"/>
    </location>
</feature>
<feature type="active site" description="Nucleophile" evidence="1">
    <location>
        <position position="402"/>
    </location>
</feature>
<feature type="binding site" evidence="1">
    <location>
        <position position="81"/>
    </location>
    <ligand>
        <name>[4Fe-4S] cluster</name>
        <dbReference type="ChEBI" id="CHEBI:49883"/>
    </ligand>
</feature>
<feature type="binding site" evidence="1">
    <location>
        <position position="87"/>
    </location>
    <ligand>
        <name>[4Fe-4S] cluster</name>
        <dbReference type="ChEBI" id="CHEBI:49883"/>
    </ligand>
</feature>
<feature type="binding site" evidence="1">
    <location>
        <position position="90"/>
    </location>
    <ligand>
        <name>[4Fe-4S] cluster</name>
        <dbReference type="ChEBI" id="CHEBI:49883"/>
    </ligand>
</feature>
<feature type="binding site" evidence="1">
    <location>
        <position position="173"/>
    </location>
    <ligand>
        <name>[4Fe-4S] cluster</name>
        <dbReference type="ChEBI" id="CHEBI:49883"/>
    </ligand>
</feature>
<feature type="binding site" evidence="1">
    <location>
        <position position="276"/>
    </location>
    <ligand>
        <name>S-adenosyl-L-methionine</name>
        <dbReference type="ChEBI" id="CHEBI:59789"/>
    </ligand>
</feature>
<feature type="binding site" evidence="1">
    <location>
        <position position="305"/>
    </location>
    <ligand>
        <name>S-adenosyl-L-methionine</name>
        <dbReference type="ChEBI" id="CHEBI:59789"/>
    </ligand>
</feature>
<feature type="binding site" evidence="1">
    <location>
        <position position="310"/>
    </location>
    <ligand>
        <name>S-adenosyl-L-methionine</name>
        <dbReference type="ChEBI" id="CHEBI:59789"/>
    </ligand>
</feature>
<feature type="binding site" evidence="1">
    <location>
        <position position="326"/>
    </location>
    <ligand>
        <name>S-adenosyl-L-methionine</name>
        <dbReference type="ChEBI" id="CHEBI:59789"/>
    </ligand>
</feature>
<feature type="binding site" evidence="1">
    <location>
        <position position="353"/>
    </location>
    <ligand>
        <name>S-adenosyl-L-methionine</name>
        <dbReference type="ChEBI" id="CHEBI:59789"/>
    </ligand>
</feature>
<feature type="binding site" evidence="1">
    <location>
        <position position="372"/>
    </location>
    <ligand>
        <name>S-adenosyl-L-methionine</name>
        <dbReference type="ChEBI" id="CHEBI:59789"/>
    </ligand>
</feature>
<reference key="1">
    <citation type="journal article" date="2004" name="Proc. Natl. Acad. Sci. U.S.A.">
        <title>Genome sequence of the deep-sea gamma-proteobacterium Idiomarina loihiensis reveals amino acid fermentation as a source of carbon and energy.</title>
        <authorList>
            <person name="Hou S."/>
            <person name="Saw J.H."/>
            <person name="Lee K.S."/>
            <person name="Freitas T.A."/>
            <person name="Belisle C."/>
            <person name="Kawarabayasi Y."/>
            <person name="Donachie S.P."/>
            <person name="Pikina A."/>
            <person name="Galperin M.Y."/>
            <person name="Koonin E.V."/>
            <person name="Makarova K.S."/>
            <person name="Omelchenko M.V."/>
            <person name="Sorokin A."/>
            <person name="Wolf Y.I."/>
            <person name="Li Q.X."/>
            <person name="Keum Y.S."/>
            <person name="Campbell S."/>
            <person name="Denery J."/>
            <person name="Aizawa S."/>
            <person name="Shibata S."/>
            <person name="Malahoff A."/>
            <person name="Alam M."/>
        </authorList>
    </citation>
    <scope>NUCLEOTIDE SEQUENCE [LARGE SCALE GENOMIC DNA]</scope>
    <source>
        <strain>ATCC BAA-735 / DSM 15497 / L2-TR</strain>
    </source>
</reference>
<keyword id="KW-0004">4Fe-4S</keyword>
<keyword id="KW-0408">Iron</keyword>
<keyword id="KW-0411">Iron-sulfur</keyword>
<keyword id="KW-0479">Metal-binding</keyword>
<keyword id="KW-0489">Methyltransferase</keyword>
<keyword id="KW-1185">Reference proteome</keyword>
<keyword id="KW-0698">rRNA processing</keyword>
<keyword id="KW-0949">S-adenosyl-L-methionine</keyword>
<keyword id="KW-0808">Transferase</keyword>
<proteinExistence type="inferred from homology"/>
<accession>Q5R111</accession>
<gene>
    <name evidence="1" type="primary">rlmD</name>
    <name type="ordered locus">IL0805</name>
</gene>
<protein>
    <recommendedName>
        <fullName evidence="1">23S rRNA (uracil(1939)-C(5))-methyltransferase RlmD</fullName>
        <ecNumber evidence="1">2.1.1.190</ecNumber>
    </recommendedName>
    <alternativeName>
        <fullName evidence="1">23S rRNA(m5U1939)-methyltransferase</fullName>
    </alternativeName>
</protein>
<dbReference type="EC" id="2.1.1.190" evidence="1"/>
<dbReference type="EMBL" id="AE017340">
    <property type="protein sequence ID" value="AAV81645.1"/>
    <property type="molecule type" value="Genomic_DNA"/>
</dbReference>
<dbReference type="RefSeq" id="WP_011234056.1">
    <property type="nucleotide sequence ID" value="NC_006512.1"/>
</dbReference>
<dbReference type="SMR" id="Q5R111"/>
<dbReference type="STRING" id="283942.IL0805"/>
<dbReference type="GeneID" id="41335960"/>
<dbReference type="KEGG" id="ilo:IL0805"/>
<dbReference type="eggNOG" id="COG2265">
    <property type="taxonomic scope" value="Bacteria"/>
</dbReference>
<dbReference type="HOGENOM" id="CLU_014689_8_2_6"/>
<dbReference type="OrthoDB" id="9804590at2"/>
<dbReference type="Proteomes" id="UP000001171">
    <property type="component" value="Chromosome"/>
</dbReference>
<dbReference type="GO" id="GO:0051539">
    <property type="term" value="F:4 iron, 4 sulfur cluster binding"/>
    <property type="evidence" value="ECO:0007669"/>
    <property type="project" value="UniProtKB-KW"/>
</dbReference>
<dbReference type="GO" id="GO:0005506">
    <property type="term" value="F:iron ion binding"/>
    <property type="evidence" value="ECO:0007669"/>
    <property type="project" value="UniProtKB-UniRule"/>
</dbReference>
<dbReference type="GO" id="GO:0003723">
    <property type="term" value="F:RNA binding"/>
    <property type="evidence" value="ECO:0007669"/>
    <property type="project" value="InterPro"/>
</dbReference>
<dbReference type="GO" id="GO:0070041">
    <property type="term" value="F:rRNA (uridine-C5-)-methyltransferase activity"/>
    <property type="evidence" value="ECO:0007669"/>
    <property type="project" value="UniProtKB-UniRule"/>
</dbReference>
<dbReference type="GO" id="GO:0070475">
    <property type="term" value="P:rRNA base methylation"/>
    <property type="evidence" value="ECO:0007669"/>
    <property type="project" value="TreeGrafter"/>
</dbReference>
<dbReference type="CDD" id="cd02440">
    <property type="entry name" value="AdoMet_MTases"/>
    <property type="match status" value="1"/>
</dbReference>
<dbReference type="Gene3D" id="2.40.50.1070">
    <property type="match status" value="1"/>
</dbReference>
<dbReference type="Gene3D" id="2.40.50.140">
    <property type="entry name" value="Nucleic acid-binding proteins"/>
    <property type="match status" value="1"/>
</dbReference>
<dbReference type="Gene3D" id="3.40.50.150">
    <property type="entry name" value="Vaccinia Virus protein VP39"/>
    <property type="match status" value="1"/>
</dbReference>
<dbReference type="HAMAP" id="MF_01010">
    <property type="entry name" value="23SrRNA_methyltr_RlmD"/>
    <property type="match status" value="1"/>
</dbReference>
<dbReference type="InterPro" id="IPR001566">
    <property type="entry name" value="23S_rRNA_MeTrfase_RlmD"/>
</dbReference>
<dbReference type="InterPro" id="IPR030390">
    <property type="entry name" value="MeTrfase_TrmA_AS"/>
</dbReference>
<dbReference type="InterPro" id="IPR030391">
    <property type="entry name" value="MeTrfase_TrmA_CS"/>
</dbReference>
<dbReference type="InterPro" id="IPR012340">
    <property type="entry name" value="NA-bd_OB-fold"/>
</dbReference>
<dbReference type="InterPro" id="IPR029063">
    <property type="entry name" value="SAM-dependent_MTases_sf"/>
</dbReference>
<dbReference type="InterPro" id="IPR010280">
    <property type="entry name" value="U5_MeTrfase_fam"/>
</dbReference>
<dbReference type="NCBIfam" id="TIGR00479">
    <property type="entry name" value="rumA"/>
    <property type="match status" value="1"/>
</dbReference>
<dbReference type="PANTHER" id="PTHR11061:SF49">
    <property type="entry name" value="23S RRNA (URACIL(1939)-C(5))-METHYLTRANSFERASE RLMD"/>
    <property type="match status" value="1"/>
</dbReference>
<dbReference type="PANTHER" id="PTHR11061">
    <property type="entry name" value="RNA M5U METHYLTRANSFERASE"/>
    <property type="match status" value="1"/>
</dbReference>
<dbReference type="Pfam" id="PF05958">
    <property type="entry name" value="tRNA_U5-meth_tr"/>
    <property type="match status" value="1"/>
</dbReference>
<dbReference type="SUPFAM" id="SSF53335">
    <property type="entry name" value="S-adenosyl-L-methionine-dependent methyltransferases"/>
    <property type="match status" value="1"/>
</dbReference>
<dbReference type="PROSITE" id="PS51687">
    <property type="entry name" value="SAM_MT_RNA_M5U"/>
    <property type="match status" value="1"/>
</dbReference>
<dbReference type="PROSITE" id="PS01230">
    <property type="entry name" value="TRMA_1"/>
    <property type="match status" value="1"/>
</dbReference>
<dbReference type="PROSITE" id="PS01231">
    <property type="entry name" value="TRMA_2"/>
    <property type="match status" value="1"/>
</dbReference>
<sequence>MAQFFKPQKRNKSVSKTLKGQVSALDHQARAVVRAAVKGQSTRFIMGALPGEVIEYKTAGKHSGHLERILEPSSDRREVPCEYYASCGGCDFQHIDEQKQLAHKRQVVEELFQKFGVFNPQTSSLPWQEPLVSEPMRYRRRVRLATRWLGKEQKLLIGFREAQSHHIVPIEDCLVADEILLHCVNTLYPLLNTSTVASKLGHIEAINTNTPVILLRITEALPGDAMQALQEWQTVNKTNIWLQSENDLQPLAGAAMPFDTSIDGDKLYFQPGDFLQVNGGINQRMVQQAMDWLKPEKTQRVYDFFAGIGNFSLPLARRAQSVLAVEGVYRMAEQTRINAESNGMDNLSSLSADLNEITASDLGKPADLWCLDPARPGAEGVVKLLHKLKPEHRPQRILYVSCAPDTLARDIAGMLTESKGCNYRIIGLSTVDMFPQTHHIETMVCLERAS</sequence>
<evidence type="ECO:0000255" key="1">
    <source>
        <dbReference type="HAMAP-Rule" id="MF_01010"/>
    </source>
</evidence>
<organism>
    <name type="scientific">Idiomarina loihiensis (strain ATCC BAA-735 / DSM 15497 / L2-TR)</name>
    <dbReference type="NCBI Taxonomy" id="283942"/>
    <lineage>
        <taxon>Bacteria</taxon>
        <taxon>Pseudomonadati</taxon>
        <taxon>Pseudomonadota</taxon>
        <taxon>Gammaproteobacteria</taxon>
        <taxon>Alteromonadales</taxon>
        <taxon>Idiomarinaceae</taxon>
        <taxon>Idiomarina</taxon>
    </lineage>
</organism>
<comment type="function">
    <text evidence="1">Catalyzes the formation of 5-methyl-uridine at position 1939 (m5U1939) in 23S rRNA.</text>
</comment>
<comment type="catalytic activity">
    <reaction evidence="1">
        <text>uridine(1939) in 23S rRNA + S-adenosyl-L-methionine = 5-methyluridine(1939) in 23S rRNA + S-adenosyl-L-homocysteine + H(+)</text>
        <dbReference type="Rhea" id="RHEA:42908"/>
        <dbReference type="Rhea" id="RHEA-COMP:10278"/>
        <dbReference type="Rhea" id="RHEA-COMP:10279"/>
        <dbReference type="ChEBI" id="CHEBI:15378"/>
        <dbReference type="ChEBI" id="CHEBI:57856"/>
        <dbReference type="ChEBI" id="CHEBI:59789"/>
        <dbReference type="ChEBI" id="CHEBI:65315"/>
        <dbReference type="ChEBI" id="CHEBI:74447"/>
        <dbReference type="EC" id="2.1.1.190"/>
    </reaction>
</comment>
<comment type="similarity">
    <text evidence="1">Belongs to the class I-like SAM-binding methyltransferase superfamily. RNA M5U methyltransferase family. RlmD subfamily.</text>
</comment>